<dbReference type="PIR" id="A00243">
    <property type="entry name" value="FEDH1"/>
</dbReference>
<dbReference type="SMR" id="P00239"/>
<dbReference type="GO" id="GO:0009507">
    <property type="term" value="C:chloroplast"/>
    <property type="evidence" value="ECO:0007669"/>
    <property type="project" value="UniProtKB-SubCell"/>
</dbReference>
<dbReference type="GO" id="GO:0051537">
    <property type="term" value="F:2 iron, 2 sulfur cluster binding"/>
    <property type="evidence" value="ECO:0007669"/>
    <property type="project" value="UniProtKB-KW"/>
</dbReference>
<dbReference type="GO" id="GO:0009055">
    <property type="term" value="F:electron transfer activity"/>
    <property type="evidence" value="ECO:0007669"/>
    <property type="project" value="InterPro"/>
</dbReference>
<dbReference type="GO" id="GO:0046872">
    <property type="term" value="F:metal ion binding"/>
    <property type="evidence" value="ECO:0007669"/>
    <property type="project" value="UniProtKB-KW"/>
</dbReference>
<dbReference type="GO" id="GO:0022900">
    <property type="term" value="P:electron transport chain"/>
    <property type="evidence" value="ECO:0007669"/>
    <property type="project" value="InterPro"/>
</dbReference>
<dbReference type="CDD" id="cd00207">
    <property type="entry name" value="fer2"/>
    <property type="match status" value="1"/>
</dbReference>
<dbReference type="FunFam" id="3.10.20.30:FF:000014">
    <property type="entry name" value="Ferredoxin"/>
    <property type="match status" value="1"/>
</dbReference>
<dbReference type="Gene3D" id="3.10.20.30">
    <property type="match status" value="1"/>
</dbReference>
<dbReference type="InterPro" id="IPR036010">
    <property type="entry name" value="2Fe-2S_ferredoxin-like_sf"/>
</dbReference>
<dbReference type="InterPro" id="IPR001041">
    <property type="entry name" value="2Fe-2S_ferredoxin-type"/>
</dbReference>
<dbReference type="InterPro" id="IPR006058">
    <property type="entry name" value="2Fe2S_fd_BS"/>
</dbReference>
<dbReference type="InterPro" id="IPR012675">
    <property type="entry name" value="Beta-grasp_dom_sf"/>
</dbReference>
<dbReference type="InterPro" id="IPR010241">
    <property type="entry name" value="Fd_pln"/>
</dbReference>
<dbReference type="NCBIfam" id="TIGR02008">
    <property type="entry name" value="fdx_plant"/>
    <property type="match status" value="1"/>
</dbReference>
<dbReference type="PANTHER" id="PTHR43112">
    <property type="entry name" value="FERREDOXIN"/>
    <property type="match status" value="1"/>
</dbReference>
<dbReference type="PANTHER" id="PTHR43112:SF3">
    <property type="entry name" value="FERREDOXIN-2, CHLOROPLASTIC"/>
    <property type="match status" value="1"/>
</dbReference>
<dbReference type="Pfam" id="PF00111">
    <property type="entry name" value="Fer2"/>
    <property type="match status" value="1"/>
</dbReference>
<dbReference type="SUPFAM" id="SSF54292">
    <property type="entry name" value="2Fe-2S ferredoxin-like"/>
    <property type="match status" value="1"/>
</dbReference>
<dbReference type="PROSITE" id="PS00197">
    <property type="entry name" value="2FE2S_FER_1"/>
    <property type="match status" value="1"/>
</dbReference>
<dbReference type="PROSITE" id="PS51085">
    <property type="entry name" value="2FE2S_FER_2"/>
    <property type="match status" value="1"/>
</dbReference>
<evidence type="ECO:0000255" key="1">
    <source>
        <dbReference type="PROSITE-ProRule" id="PRU00465"/>
    </source>
</evidence>
<evidence type="ECO:0000305" key="2"/>
<feature type="chain" id="PRO_0000189326" description="Ferredoxin-1">
    <location>
        <begin position="1"/>
        <end position="95"/>
    </location>
</feature>
<feature type="domain" description="2Fe-2S ferredoxin-type" evidence="1">
    <location>
        <begin position="2"/>
        <end position="92"/>
    </location>
</feature>
<feature type="binding site" evidence="1">
    <location>
        <position position="38"/>
    </location>
    <ligand>
        <name>[2Fe-2S] cluster</name>
        <dbReference type="ChEBI" id="CHEBI:190135"/>
    </ligand>
</feature>
<feature type="binding site" evidence="1">
    <location>
        <position position="43"/>
    </location>
    <ligand>
        <name>[2Fe-2S] cluster</name>
        <dbReference type="ChEBI" id="CHEBI:190135"/>
    </ligand>
</feature>
<feature type="binding site" evidence="1">
    <location>
        <position position="46"/>
    </location>
    <ligand>
        <name>[2Fe-2S] cluster</name>
        <dbReference type="ChEBI" id="CHEBI:190135"/>
    </ligand>
</feature>
<feature type="binding site" evidence="1">
    <location>
        <position position="76"/>
    </location>
    <ligand>
        <name>[2Fe-2S] cluster</name>
        <dbReference type="ChEBI" id="CHEBI:190135"/>
    </ligand>
</feature>
<feature type="sequence variant">
    <original>M</original>
    <variation>Q</variation>
    <location>
        <position position="3"/>
    </location>
</feature>
<feature type="sequence variant">
    <original>V</original>
    <variation>L</variation>
    <location>
        <position position="32"/>
    </location>
</feature>
<feature type="sequence variant">
    <original>V</original>
    <variation>L</variation>
    <location>
        <position position="50"/>
    </location>
</feature>
<comment type="function">
    <text>Ferredoxins are iron-sulfur proteins that transfer electrons in a wide variety of metabolic reactions.</text>
</comment>
<comment type="cofactor">
    <cofactor>
        <name>[2Fe-2S] cluster</name>
        <dbReference type="ChEBI" id="CHEBI:190135"/>
    </cofactor>
    <text>Binds 1 [2Fe-2S] cluster.</text>
</comment>
<comment type="subcellular location">
    <subcellularLocation>
        <location>Plastid</location>
        <location>Chloroplast</location>
    </subcellularLocation>
</comment>
<comment type="similarity">
    <text evidence="2">Belongs to the 2Fe2S plant-type ferredoxin family.</text>
</comment>
<reference key="1">
    <citation type="journal article" date="1980" name="Phytochemistry">
        <title>Purification and sequence determination of two ferredoxins from Dunaliella salina.</title>
        <authorList>
            <person name="Hase T."/>
            <person name="Matsubara H."/>
            <person name="Ben-Amotz A."/>
            <person name="Rao K.K."/>
            <person name="Hall D.O."/>
        </authorList>
    </citation>
    <scope>PROTEIN SEQUENCE</scope>
</reference>
<keyword id="KW-0001">2Fe-2S</keyword>
<keyword id="KW-0150">Chloroplast</keyword>
<keyword id="KW-0903">Direct protein sequencing</keyword>
<keyword id="KW-0249">Electron transport</keyword>
<keyword id="KW-0408">Iron</keyword>
<keyword id="KW-0411">Iron-sulfur</keyword>
<keyword id="KW-0479">Metal-binding</keyword>
<keyword id="KW-0934">Plastid</keyword>
<keyword id="KW-0813">Transport</keyword>
<name>FER1_DUNSA</name>
<sequence>SYMVTLKTPSGEQKVEVSPDSYILDAAEEAGVDLPYSCRAGSCSSCAGKVESGTVDQSDQSFLDDDQMDSGFVLTCVAYATSDCTIVTHQEENLY</sequence>
<protein>
    <recommendedName>
        <fullName>Ferredoxin-1</fullName>
    </recommendedName>
    <alternativeName>
        <fullName>Ferredoxin I</fullName>
    </alternativeName>
</protein>
<organism>
    <name type="scientific">Dunaliella salina</name>
    <name type="common">Green alga</name>
    <name type="synonym">Protococcus salinus</name>
    <dbReference type="NCBI Taxonomy" id="3046"/>
    <lineage>
        <taxon>Eukaryota</taxon>
        <taxon>Viridiplantae</taxon>
        <taxon>Chlorophyta</taxon>
        <taxon>core chlorophytes</taxon>
        <taxon>Chlorophyceae</taxon>
        <taxon>CS clade</taxon>
        <taxon>Chlamydomonadales</taxon>
        <taxon>Dunaliellaceae</taxon>
        <taxon>Dunaliella</taxon>
    </lineage>
</organism>
<proteinExistence type="evidence at protein level"/>
<accession>P00239</accession>